<comment type="function">
    <text evidence="4 5 6 9 10 11">Bassianolide nonribosomal synthetase that mediates the biosynthesis of bassianolide (BSL), a non-ribosomal cyclodepsipeptide that shows insecticidal and cancer cell antiproliferative activity (PubMed:19285149, PubMed:23608474, PubMed:23727842, PubMed:29163920, PubMed:31388353, PubMed:31471217). BSLS first catalyzes the iterative synthesis of an enzyme-bound dipeptidol monomer intermediate from D-2-hydroxyisovalerate and L-leucine before performing the condensation and cyclization of 4 dipeptidol monomers to yield the cyclic tetrameric ester bassianolide (PubMed:23608474, PubMed:23727842, PubMed:29163920, PubMed:31388353, PubMed:31471217). The N-methyltransferase MT domain is responsible for the methylation of the leucine residues of bassianolide (PubMed:29163920, PubMed:31388353). BSLS is flexible with both the amino acid and hydroxyl acid precursors, and produces bassianolide as the major product (containing N-methyl-L-Leu), together with small amounts of beauvericin and its analogs beauvericins A-C (containing N-methyl-L-Phe) (PubMed:31388353).</text>
</comment>
<comment type="biophysicochemical properties">
    <kinetics>
        <KM evidence="10">0.46 uM for L-phenylalanyl-N-acetyl-cysteamine thioester (by the MT domain)</KM>
        <KM evidence="10">2.8 uM for L-leucyl-N-acetyl-cysteamine thioester(by the MT domain)</KM>
        <Vmax evidence="10">0.41 uM/min/mg enzyme toward L-phenylalanyl-N-acetyl-cysteamine thioester (by the MT domain)</Vmax>
        <Vmax evidence="10">0.05 uM/min/mg enzyme toward L-leucyl-N-acetyl-cysteamine thioester (by the MT domain)</Vmax>
    </kinetics>
</comment>
<comment type="induction">
    <text evidence="7">Expression is induced during insect infection.</text>
</comment>
<comment type="domain">
    <text evidence="6 9 10 11 13">NRP synthetases are composed of discrete domains (adenylation (A), thiolation (T) or peptidyl carrier protein (PCP) and condensation (C) domains) which when grouped together are referred to as a single module. Each module is responsible for the recognition (via the A domain) and incorporation of a single amino acid into the growing peptide product. Thus, an NRP synthetase is generally composed of one or more modules and can terminate in a thioesterase domain (TE) that releases the newly synthesized peptide from the enzyme. Occasionally, additional domains required for further modifications are also present (Probable). Bassianolide synthetase has the C1-A1-T1-C2-A2-MT-T2a-T2b-C3 domain organization. During catalysis, C3 and C2 take turns to incorporate the two biosynthetic precursors into the growing depsipeptide chain that swings between T1 and T2a/T2b with C3 cyclizing the chain when it reaches the full length (PubMed:23727842, PubMed:29163920, PubMed:31388353, PubMed:31471217). The N-methyltransferase MT domain in module 2 is responsible for the methylation of the leucine residues integrated in the backbone structure (PubMed:29163920, PubMed:31388353).</text>
</comment>
<comment type="disruption phenotype">
    <text evidence="4">Abolishes the production of bassianolide but does not affect the biosynthesis of beauvericin (PubMed:19285149). Attenuates the virulence against insects, including the corn earworm (Helicoverpa zea), the fall armyworm (Spodoptera exigua) and the greater wax moth (Galleria mellonella) (PubMed:19285149).</text>
</comment>
<comment type="biotechnology">
    <text evidence="4 8">Shows insecticidal activity and contributes to the virulence of the fungus against insects including the corn earworm (Helicoverpa zea), the fall armyworm (Spodoptera exigua) and the greater wax moth (Galleria mellonella) (PubMed:19285149). Bassianolide possesses antitumor activities and displays significant cytotoxicity against several human tumor cell lines, including A549, SK-OV-3, HepG2, HCT-15, MCF-7 and MDA-MB 231 cell lines with IC(50) values of 7.24, 8.44, 15.39, 6.40, 11.42 and 3.98 ug/ml respectively (PubMed:27676608). Bassianolide especially induces G0/G1 arrest associated with a decrease of cyclin A, D1 and an increase of p53, MDM2, and p21 expression in human breast adenocarcinoma cell lines (PubMed:27676608).</text>
</comment>
<comment type="similarity">
    <text evidence="13">Belongs to the NRP synthetase family.</text>
</comment>
<accession>J5JV76</accession>
<organism>
    <name type="scientific">Beauveria bassiana (strain ARSEF 2860)</name>
    <name type="common">White muscardine disease fungus</name>
    <name type="synonym">Tritirachium shiotae</name>
    <dbReference type="NCBI Taxonomy" id="655819"/>
    <lineage>
        <taxon>Eukaryota</taxon>
        <taxon>Fungi</taxon>
        <taxon>Dikarya</taxon>
        <taxon>Ascomycota</taxon>
        <taxon>Pezizomycotina</taxon>
        <taxon>Sordariomycetes</taxon>
        <taxon>Hypocreomycetidae</taxon>
        <taxon>Hypocreales</taxon>
        <taxon>Cordycipitaceae</taxon>
        <taxon>Beauveria</taxon>
    </lineage>
</organism>
<gene>
    <name evidence="12" type="primary">BSLS</name>
    <name type="ORF">BBA_02630</name>
</gene>
<sequence>MEPPNNANTGQLGPTLPNGTVDLPTDLSREITRHFGLEQDEIEEILPCTPFQRDVIECASDDKRRAVGHVVYEIPEDVDTERLAAAWKATVRYTPALRTCIFTSETGNAFQVVLRDCFIFARMYCPSAHLKSAIVKDEATAAVAGPRCNRYVLTGEPNSKRRVLVWTFSHSFVDSAFQGRILQQVLAAYKDEHGRVFSLQPTTDLVESENGDCLSTPASERTVGIERATQFWQEKLHGLDASVFPHLPSHKRVPAIDARADHYLPCPPFIQHEWSSTTVCRTALAILLARYTHSSEALFGVVTEQSHEEHPLLLDGPTSTVVPFRVLCAPNQSVSEVMEAITTYDHDMRQFAHAGLCNISRIGDDASAACGFQTVLMVTDSRTASADEIHHVLEEPEKFIPCTDRALLLSCQMTDEGVLLVARYDQSILEPLQMARFLRQLGFLINKLQSTDGSPCVGQLDVLAPEDRTEIEGWNSEPLQTQDCLIHSEVVKNADDTPNKPAVCAWDGEWTYSELNNVSSRLASYISSLDLGQQLIVPIYLEKSKWVMAAILAVLKAGHAFTLIDPNDPPARTAQIIKQASASIALTSALHQSKMQTVVGRCITVDDDLFQTLTTFEGSQVASAAKPGDLAYVIFTSGSTGDPKGIMIEHRAFYSSVVKFGKALGIRSSTRALQFATHGFGAFLLEVLTTLIHGGCICIPSDHDRMHNIPGFIRQSQINWMMATPSYMTTMKPEDVPGLETLVLVGEQMSSSINDVWLSELQLLDGYGQSESSSICFVGKISDSSRDPNNLGRAIGSHSWIVNPDNPDQLVPIGAIGELLIESPGIARGYLFSQSTETPFLERAPAWYASKQPPYGVKFYRTGDLARYAPDGTVICLGRMDSQVKIRGQRVELDAIENLLRRQFPSDVTVVAEAVKRSDLPSSVVITGFLISSEYVVGAPSTEDTYILDQAVTQEINAKMRQILPAHSIPSFYICMKSLPRTATGKVDRRKLRSIGSSLLALQAQSTAPRSSQAPDASAGVTKLEEVWMDIFNLTPNSHNIGGNFFALGGDSITAIKMVNMARAAGIQLKVSDIFQNPTLASLQAAIGGSSMTVTSIPALALDGPVEQSYSQGRLWFLDQLEIGANWYTIPYAVRLRGPLDVDALNRALLALEKRHETLRTTFEDQDGVGVQIIHETLLDQLRIINADHADYVQLLKQEQTAPFNLASESGWRVSLIRLDDDDNILSIVMHHIISDGWSIDVLRRELGQLYAAALHGADLFGSALSPLPIQYRDFSVWQKQDAQVAEHERQLQYWQKQLADCSPAKLPTDFHRPALLSGKATTVPVTITSELYYRLQEFCSTFNTTSFVVLLATFRAAHYRLTGVDDAVIGTPIANRNRHELENLIGFFVNTQCMRITINEDEETFESLVRQVRSTTTAAFEHEDVPFERVVSAMLPGSRDLSQNPLAQLVFAIHSHKDLGKFELEALESEPLQNEVYTRFDAEFHFFQAPDGLTGYINFATELFKVETIQNVVSVFLQILRHGLEHPQTLISVVPLTDGLAELRSMGLLEIKKVEYPRDSSVVDVFATQVASYPDTLAVVDSSSRLTYAELDHQSDLLATWLRQQNLPTEALVVVLAPRSCETIITFLGILKANLAYLPLDIRSPITRMRDVLSTLPGRTIALLCSDEVAPDFQLPSIELVRIADALEEAAGMTSLNGHEHVPVPSPSPTSLAYVLYTSGSTGRPKGVMIEHRAIVRLARSDIIPDYRPACGDTMAHMFNTAFDGATYEIYTMLLNGGTLVCVDYMDTLSPKSLEAVFKKEQVNATIMAPALLKLYLADARDALKGLDVLISGGDRFDPQDAVDAQSLVRGSCYNGYGPTENGVFSTVYKVDKNDPFVNGVPLGRAVNNSGAYVVDRNQQLVGPGIIGELVVTGDGLARGYTERAFDQNRFIQLKIEGQSVRGYRTGDRVRYRVGEGLIEFFGRMDFQFKIRSNRIEAGEVEAAILSHPAVRNAAVILHVQEKLEPEIVGFVVAEHDDTAEQEEAGDQVEGWQAFFESTTYTELDTVSSSEIGKDFKGWTSMYDGNEIDKAEMQEWLDDTIHTLTDGQALGHVLEIGTGSGMVLFNLGSGLQSFVGLEPSKSAAAFVNNAIKSTPALAGKAHVFVGTATDTNKLDDLHPDLVIFNSVLQYFPTRDYLEQVVDALVHLRSAKRIFFGDVRSYATNRHFLAARAIYTLGNHTTKDEVRKKMAEMEEREEEFLVEPAFFTTLVNRLPDVRHVEIIPKNMQATNELSAYRYAAVVHLRGPDELTRPVHLIKMDDWVDFQASHMHKDALREYLRLAENTKTVAISNIPYGKTIFERQVVESLDDTSEDAPHASLDGAAWISAVRSDAKARSSLSVPDLVLLAKETGFRVEVSAARQWSQSGALDAVFHRYHPAEPDVRTLFQFPTDNDVRMSALLTNQPLQRLQKRRVAVQVREWLQDRIPSYMIPSHIVALDQMPLNTSGKVDRKELSRQAKAIKKVQKSAPPTAPAFPLSEVEVMLCEELTKTFEMDVNITDDFFQLGGHSLLATRLVARISHRLGARLTVKDVFDYPVFSELADIIRQQLASKNTLLPTASAGGGGQDKKESAGVAPTTDMEAMLCEEFANILGMDVGITDNFFDLGGHSLMATRLAARIGHRLNTTISVKDIFSHPVIFQLSAKLEVSQLESSSGGTDIKMPDYTAFQLIPAADAEKFMQDHIYPQINFSQDMVQDVYLATHLQQCFLRDVFGRPKPLVPFYVEFPPDSNPHTLATACTSLVDKYDIFRTIFVEAEGNLYQVVLKHLNLDIDVVETDANVHKTSSDLVDAIAKEPVRLGQPMIQVKVLKQTSSVRVLLWLSHALYDGLSWEHIVRDLHILSKERSLPPATQFSRYMQYVDHTRGPGCDFWRDVLQNAPITNLSDAGSGGRPTKAGDPRVWHAGKVISGPSQAIRSSITQATVFNAACAIVLSKETGTDNVVFGRIVSGRQGLPVRWQNIIGPCTNAVPVRAVVDAHGNHQQMLRDLQEQYLLSLPYETIGFDEIKRSCTDWPDSARNYGCCVTYQNFEYHPESEVDQQRVEMGILAKKAELIKEEPLYNVAIAGEVEPDGVHLQVTVVVDSQLFSQEGATHLMEQVCNTFQALNASL</sequence>
<feature type="chain" id="PRO_0000448665" description="Bassianolide nonribosomal cyclodepsipeptide synthetase">
    <location>
        <begin position="1"/>
        <end position="3147"/>
    </location>
</feature>
<feature type="domain" description="Carrier 1" evidence="2">
    <location>
        <begin position="1015"/>
        <end position="1091"/>
    </location>
</feature>
<feature type="domain" description="Carrier 2" evidence="2">
    <location>
        <begin position="2515"/>
        <end position="2589"/>
    </location>
</feature>
<feature type="domain" description="Carrier 3" evidence="2">
    <location>
        <begin position="2615"/>
        <end position="2689"/>
    </location>
</feature>
<feature type="region of interest" description="Disordered" evidence="3">
    <location>
        <begin position="1"/>
        <end position="23"/>
    </location>
</feature>
<feature type="region of interest" description="Condensation 1" evidence="1 14">
    <location>
        <begin position="69"/>
        <end position="454"/>
    </location>
</feature>
<feature type="region of interest" description="Adenylation 1" evidence="1 14">
    <location>
        <begin position="495"/>
        <end position="887"/>
    </location>
</feature>
<feature type="region of interest" description="Condensation 2" evidence="1 14">
    <location>
        <begin position="1109"/>
        <end position="1538"/>
    </location>
</feature>
<feature type="region of interest" description="Adenylation 2" evidence="1 14">
    <location>
        <begin position="1567"/>
        <end position="1973"/>
    </location>
</feature>
<feature type="region of interest" description="S-adenosyl-L-methionine-dependent N-methyltransferase (MT)" evidence="1 10">
    <location>
        <begin position="2041"/>
        <end position="2181"/>
    </location>
</feature>
<feature type="region of interest" description="Condensation 3" evidence="1 14">
    <location>
        <begin position="2735"/>
        <end position="3139"/>
    </location>
</feature>
<feature type="compositionally biased region" description="Polar residues" evidence="3">
    <location>
        <begin position="1"/>
        <end position="12"/>
    </location>
</feature>
<feature type="modified residue" description="O-(pantetheine 4'-phosphoryl)serine" evidence="2">
    <location>
        <position position="1052"/>
    </location>
</feature>
<feature type="modified residue" description="O-(pantetheine 4'-phosphoryl)serine" evidence="2">
    <location>
        <position position="2549"/>
    </location>
</feature>
<feature type="modified residue" description="O-(pantetheine 4'-phosphoryl)serine" evidence="2">
    <location>
        <position position="2649"/>
    </location>
</feature>
<proteinExistence type="evidence at protein level"/>
<dbReference type="EC" id="6.1.2.-" evidence="5 6 9 10 11"/>
<dbReference type="EC" id="2.1.1.-" evidence="9 10 11"/>
<dbReference type="EMBL" id="JH725154">
    <property type="protein sequence ID" value="EJP68628.1"/>
    <property type="molecule type" value="Genomic_DNA"/>
</dbReference>
<dbReference type="RefSeq" id="XP_008595949.1">
    <property type="nucleotide sequence ID" value="XM_008597727.1"/>
</dbReference>
<dbReference type="SMR" id="J5JV76"/>
<dbReference type="STRING" id="655819.J5JV76"/>
<dbReference type="GeneID" id="19885642"/>
<dbReference type="HOGENOM" id="CLU_000022_60_1_1"/>
<dbReference type="InParanoid" id="J5JV76"/>
<dbReference type="OrthoDB" id="5198at474943"/>
<dbReference type="Proteomes" id="UP000002762">
    <property type="component" value="Unassembled WGS sequence"/>
</dbReference>
<dbReference type="GO" id="GO:0005737">
    <property type="term" value="C:cytoplasm"/>
    <property type="evidence" value="ECO:0007669"/>
    <property type="project" value="TreeGrafter"/>
</dbReference>
<dbReference type="GO" id="GO:0016853">
    <property type="term" value="F:isomerase activity"/>
    <property type="evidence" value="ECO:0007669"/>
    <property type="project" value="UniProtKB-KW"/>
</dbReference>
<dbReference type="GO" id="GO:0016874">
    <property type="term" value="F:ligase activity"/>
    <property type="evidence" value="ECO:0007669"/>
    <property type="project" value="UniProtKB-KW"/>
</dbReference>
<dbReference type="GO" id="GO:0008168">
    <property type="term" value="F:methyltransferase activity"/>
    <property type="evidence" value="ECO:0007669"/>
    <property type="project" value="UniProtKB-KW"/>
</dbReference>
<dbReference type="GO" id="GO:0031177">
    <property type="term" value="F:phosphopantetheine binding"/>
    <property type="evidence" value="ECO:0007669"/>
    <property type="project" value="InterPro"/>
</dbReference>
<dbReference type="GO" id="GO:0043041">
    <property type="term" value="P:amino acid activation for nonribosomal peptide biosynthetic process"/>
    <property type="evidence" value="ECO:0007669"/>
    <property type="project" value="TreeGrafter"/>
</dbReference>
<dbReference type="GO" id="GO:0032259">
    <property type="term" value="P:methylation"/>
    <property type="evidence" value="ECO:0007669"/>
    <property type="project" value="UniProtKB-KW"/>
</dbReference>
<dbReference type="GO" id="GO:0044550">
    <property type="term" value="P:secondary metabolite biosynthetic process"/>
    <property type="evidence" value="ECO:0007669"/>
    <property type="project" value="TreeGrafter"/>
</dbReference>
<dbReference type="CDD" id="cd05930">
    <property type="entry name" value="A_NRPS"/>
    <property type="match status" value="1"/>
</dbReference>
<dbReference type="CDD" id="cd05918">
    <property type="entry name" value="A_NRPS_SidN3_like"/>
    <property type="match status" value="1"/>
</dbReference>
<dbReference type="CDD" id="cd02440">
    <property type="entry name" value="AdoMet_MTases"/>
    <property type="match status" value="1"/>
</dbReference>
<dbReference type="CDD" id="cd19542">
    <property type="entry name" value="CT_NRPS-like"/>
    <property type="match status" value="1"/>
</dbReference>
<dbReference type="CDD" id="cd19545">
    <property type="entry name" value="FUM14_C_NRPS-like"/>
    <property type="match status" value="1"/>
</dbReference>
<dbReference type="CDD" id="cd19531">
    <property type="entry name" value="LCL_NRPS-like"/>
    <property type="match status" value="1"/>
</dbReference>
<dbReference type="FunFam" id="3.30.300.30:FF:000084">
    <property type="entry name" value="Enniatin synthase"/>
    <property type="match status" value="1"/>
</dbReference>
<dbReference type="FunFam" id="3.30.300.30:FF:000015">
    <property type="entry name" value="Nonribosomal peptide synthase SidD"/>
    <property type="match status" value="1"/>
</dbReference>
<dbReference type="Gene3D" id="3.30.300.30">
    <property type="match status" value="3"/>
</dbReference>
<dbReference type="Gene3D" id="3.40.50.980">
    <property type="match status" value="2"/>
</dbReference>
<dbReference type="Gene3D" id="1.10.1200.10">
    <property type="entry name" value="ACP-like"/>
    <property type="match status" value="2"/>
</dbReference>
<dbReference type="Gene3D" id="3.40.50.1820">
    <property type="entry name" value="alpha/beta hydrolase"/>
    <property type="match status" value="1"/>
</dbReference>
<dbReference type="Gene3D" id="3.30.559.10">
    <property type="entry name" value="Chloramphenicol acetyltransferase-like domain"/>
    <property type="match status" value="3"/>
</dbReference>
<dbReference type="Gene3D" id="2.30.38.10">
    <property type="entry name" value="Luciferase, Domain 3"/>
    <property type="match status" value="1"/>
</dbReference>
<dbReference type="Gene3D" id="3.40.50.12780">
    <property type="entry name" value="N-terminal domain of ligase-like"/>
    <property type="match status" value="1"/>
</dbReference>
<dbReference type="Gene3D" id="3.30.559.30">
    <property type="entry name" value="Nonribosomal peptide synthetase, condensation domain"/>
    <property type="match status" value="3"/>
</dbReference>
<dbReference type="Gene3D" id="3.40.50.150">
    <property type="entry name" value="Vaccinia Virus protein VP39"/>
    <property type="match status" value="1"/>
</dbReference>
<dbReference type="InterPro" id="IPR010071">
    <property type="entry name" value="AA_adenyl_dom"/>
</dbReference>
<dbReference type="InterPro" id="IPR029058">
    <property type="entry name" value="AB_hydrolase_fold"/>
</dbReference>
<dbReference type="InterPro" id="IPR036736">
    <property type="entry name" value="ACP-like_sf"/>
</dbReference>
<dbReference type="InterPro" id="IPR045851">
    <property type="entry name" value="AMP-bd_C_sf"/>
</dbReference>
<dbReference type="InterPro" id="IPR020845">
    <property type="entry name" value="AMP-binding_CS"/>
</dbReference>
<dbReference type="InterPro" id="IPR000873">
    <property type="entry name" value="AMP-dep_synth/lig_dom"/>
</dbReference>
<dbReference type="InterPro" id="IPR042099">
    <property type="entry name" value="ANL_N_sf"/>
</dbReference>
<dbReference type="InterPro" id="IPR023213">
    <property type="entry name" value="CAT-like_dom_sf"/>
</dbReference>
<dbReference type="InterPro" id="IPR001242">
    <property type="entry name" value="Condensatn"/>
</dbReference>
<dbReference type="InterPro" id="IPR020806">
    <property type="entry name" value="PKS_PP-bd"/>
</dbReference>
<dbReference type="InterPro" id="IPR009081">
    <property type="entry name" value="PP-bd_ACP"/>
</dbReference>
<dbReference type="InterPro" id="IPR006162">
    <property type="entry name" value="Ppantetheine_attach_site"/>
</dbReference>
<dbReference type="InterPro" id="IPR029063">
    <property type="entry name" value="SAM-dependent_MTases_sf"/>
</dbReference>
<dbReference type="NCBIfam" id="TIGR01733">
    <property type="entry name" value="AA-adenyl-dom"/>
    <property type="match status" value="2"/>
</dbReference>
<dbReference type="PANTHER" id="PTHR45527:SF1">
    <property type="entry name" value="FATTY ACID SYNTHASE"/>
    <property type="match status" value="1"/>
</dbReference>
<dbReference type="PANTHER" id="PTHR45527">
    <property type="entry name" value="NONRIBOSOMAL PEPTIDE SYNTHETASE"/>
    <property type="match status" value="1"/>
</dbReference>
<dbReference type="Pfam" id="PF00501">
    <property type="entry name" value="AMP-binding"/>
    <property type="match status" value="2"/>
</dbReference>
<dbReference type="Pfam" id="PF00668">
    <property type="entry name" value="Condensation"/>
    <property type="match status" value="2"/>
</dbReference>
<dbReference type="Pfam" id="PF00550">
    <property type="entry name" value="PP-binding"/>
    <property type="match status" value="3"/>
</dbReference>
<dbReference type="SMART" id="SM00823">
    <property type="entry name" value="PKS_PP"/>
    <property type="match status" value="3"/>
</dbReference>
<dbReference type="SUPFAM" id="SSF56801">
    <property type="entry name" value="Acetyl-CoA synthetase-like"/>
    <property type="match status" value="2"/>
</dbReference>
<dbReference type="SUPFAM" id="SSF47336">
    <property type="entry name" value="ACP-like"/>
    <property type="match status" value="3"/>
</dbReference>
<dbReference type="SUPFAM" id="SSF52777">
    <property type="entry name" value="CoA-dependent acyltransferases"/>
    <property type="match status" value="6"/>
</dbReference>
<dbReference type="SUPFAM" id="SSF53335">
    <property type="entry name" value="S-adenosyl-L-methionine-dependent methyltransferases"/>
    <property type="match status" value="1"/>
</dbReference>
<dbReference type="PROSITE" id="PS00455">
    <property type="entry name" value="AMP_BINDING"/>
    <property type="match status" value="2"/>
</dbReference>
<dbReference type="PROSITE" id="PS50075">
    <property type="entry name" value="CARRIER"/>
    <property type="match status" value="3"/>
</dbReference>
<dbReference type="PROSITE" id="PS00012">
    <property type="entry name" value="PHOSPHOPANTETHEINE"/>
    <property type="match status" value="3"/>
</dbReference>
<evidence type="ECO:0000255" key="1"/>
<evidence type="ECO:0000255" key="2">
    <source>
        <dbReference type="PROSITE-ProRule" id="PRU00258"/>
    </source>
</evidence>
<evidence type="ECO:0000256" key="3">
    <source>
        <dbReference type="SAM" id="MobiDB-lite"/>
    </source>
</evidence>
<evidence type="ECO:0000269" key="4">
    <source>
    </source>
</evidence>
<evidence type="ECO:0000269" key="5">
    <source>
    </source>
</evidence>
<evidence type="ECO:0000269" key="6">
    <source>
    </source>
</evidence>
<evidence type="ECO:0000269" key="7">
    <source>
    </source>
</evidence>
<evidence type="ECO:0000269" key="8">
    <source>
    </source>
</evidence>
<evidence type="ECO:0000269" key="9">
    <source>
    </source>
</evidence>
<evidence type="ECO:0000269" key="10">
    <source>
    </source>
</evidence>
<evidence type="ECO:0000269" key="11">
    <source>
    </source>
</evidence>
<evidence type="ECO:0000303" key="12">
    <source>
    </source>
</evidence>
<evidence type="ECO:0000305" key="13"/>
<evidence type="ECO:0000305" key="14">
    <source>
    </source>
</evidence>
<protein>
    <recommendedName>
        <fullName evidence="12">Bassianolide nonribosomal cyclodepsipeptide synthetase</fullName>
        <shortName evidence="12">BSLS</shortName>
    </recommendedName>
    <domain>
        <recommendedName>
            <fullName evidence="12">Nonribosomal peptide synthetase</fullName>
            <ecNumber evidence="5 6 9 10 11">6.1.2.-</ecNumber>
        </recommendedName>
    </domain>
    <domain>
        <recommendedName>
            <fullName evidence="12">S-adenosyl-L-methionine-dependent N-methyltransferase</fullName>
            <ecNumber evidence="9 10 11">2.1.1.-</ecNumber>
        </recommendedName>
    </domain>
</protein>
<reference key="1">
    <citation type="journal article" date="2012" name="Sci. Rep.">
        <title>Genomic perspectives on the evolution of fungal entomopathogenicity in Beauveria bassiana.</title>
        <authorList>
            <person name="Xiao G."/>
            <person name="Ying S.-H."/>
            <person name="Zheng P."/>
            <person name="Wang Z.-L."/>
            <person name="Zhang S."/>
            <person name="Xie X.-Q."/>
            <person name="Shang Y."/>
            <person name="St Leger R.J."/>
            <person name="Zhao G.-P."/>
            <person name="Wang C."/>
            <person name="Feng M.-G."/>
        </authorList>
    </citation>
    <scope>NUCLEOTIDE SEQUENCE [LARGE SCALE GENOMIC DNA]</scope>
    <source>
        <strain>ARSEF 2860</strain>
    </source>
</reference>
<reference key="2">
    <citation type="journal article" date="2009" name="Fungal Genet. Biol.">
        <title>Biosynthesis of the cyclooligomer depsipeptide bassianolide, an insecticidal virulence factor of Beauveria bassiana.</title>
        <authorList>
            <person name="Xu Y."/>
            <person name="Orozco R."/>
            <person name="Kithsiri Wijeratne E.M."/>
            <person name="Espinosa-Artiles P."/>
            <person name="Leslie Gunatilaka A.A."/>
            <person name="Patricia Stock S."/>
            <person name="Molnar I."/>
        </authorList>
    </citation>
    <scope>FUNCTION</scope>
    <scope>DISRUPTION PHENOTYPE</scope>
    <scope>DOMAIN</scope>
    <scope>BIOTECHNOLOGY</scope>
</reference>
<reference key="3">
    <citation type="journal article" date="2013" name="Metab. Eng.">
        <title>Engineered production of fungal anticancer cyclooligomer depsipeptides in Saccharomyces cerevisiae.</title>
        <authorList>
            <person name="Yu D."/>
            <person name="Xu F."/>
            <person name="Zi J."/>
            <person name="Wang S."/>
            <person name="Gage D."/>
            <person name="Zeng J."/>
            <person name="Zhan J."/>
        </authorList>
    </citation>
    <scope>FUNCTION</scope>
    <scope>CATALYTIC ACTIVITY</scope>
</reference>
<reference key="4">
    <citation type="journal article" date="2013" name="Chem. Commun. (Camb.)">
        <title>Functional dissection and module swapping of fungal cyclooligomer depsipeptide synthetases.</title>
        <authorList>
            <person name="Yu D."/>
            <person name="Xu F."/>
            <person name="Gage D."/>
            <person name="Zhan J."/>
        </authorList>
    </citation>
    <scope>FUNCTION</scope>
    <scope>CATALYTIC ACTIVITY</scope>
    <scope>DOMAIN</scope>
</reference>
<reference key="5">
    <citation type="journal article" date="2015" name="J. Invertebr. Pathol.">
        <title>Assessing gene expression during pathogenesis: Use of qRT-PCR to follow toxin production in the entomopathogenic fungus Beauveria bassiana during infection and immune response of the insect host Triatoma infestans.</title>
        <authorList>
            <person name="Lobo L.S."/>
            <person name="Luz C."/>
            <person name="Fernandes E.K."/>
            <person name="Juarez M.P."/>
            <person name="Pedrini N."/>
        </authorList>
    </citation>
    <scope>INDUCTION</scope>
</reference>
<reference key="6">
    <citation type="journal article" date="2016" name="Bioorg. Chem.">
        <title>Synthesis and antitumor activity of (-)-bassianolide in MDA-MB 231 breast cancer cells through cell cycle arrest.</title>
        <authorList>
            <person name="Mun B."/>
            <person name="Park Y.J."/>
            <person name="Sung G.H."/>
            <person name="Lee Y."/>
            <person name="Kim K.H."/>
        </authorList>
    </citation>
    <scope>BIOTECHNOLOGY</scope>
</reference>
<reference key="7">
    <citation type="journal article" date="2017" name="Chem. Sci.">
        <title>Harnessing fungal nonribosomal cyclodepsipeptide synthetases for mechanistic insights and tailored engineering.</title>
        <authorList>
            <person name="Steiniger C."/>
            <person name="Hoffmann S."/>
            <person name="Mainz A."/>
            <person name="Kaiser M."/>
            <person name="Voigt K."/>
            <person name="Meyer V."/>
            <person name="Suessmuth R.D."/>
        </authorList>
    </citation>
    <scope>FUNCTION</scope>
    <scope>CATALYTIC ACTIVITY</scope>
    <scope>DOMAIN</scope>
</reference>
<reference key="8">
    <citation type="journal article" date="2019" name="Cell Chem. Biol.">
        <title>Probing Exchange Units for Combining Iterative and Linear Fungal Nonribosomal Peptide Synthetases.</title>
        <authorList>
            <person name="Steiniger C."/>
            <person name="Hoffmann S."/>
            <person name="Suessmuth R.D."/>
        </authorList>
    </citation>
    <scope>FUNCTION</scope>
    <scope>CATALYTIC ACTIVITY</scope>
    <scope>DOMAIN</scope>
</reference>
<reference key="9">
    <citation type="journal article" date="2019" name="J. Biol. Eng.">
        <title>Modified substrate specificity of a methyltransferase domain by protein insertion into an adenylation domain of the bassianolide synthetase.</title>
        <authorList>
            <person name="Xu F."/>
            <person name="Butler R."/>
            <person name="May K."/>
            <person name="Rexhepaj M."/>
            <person name="Yu D."/>
            <person name="Zi J."/>
            <person name="Chen Y."/>
            <person name="Liang Y."/>
            <person name="Zeng J."/>
            <person name="Hevel J."/>
            <person name="Zhan J."/>
        </authorList>
    </citation>
    <scope>FUNCTION</scope>
    <scope>CATALYTIC ACTIVITY</scope>
    <scope>DOMAIN</scope>
    <scope>BIOPHYSICOCHEMICAL PROPERTIES</scope>
</reference>
<name>BSLS_BEAB2</name>
<keyword id="KW-0413">Isomerase</keyword>
<keyword id="KW-0436">Ligase</keyword>
<keyword id="KW-0489">Methyltransferase</keyword>
<keyword id="KW-0511">Multifunctional enzyme</keyword>
<keyword id="KW-0596">Phosphopantetheine</keyword>
<keyword id="KW-0597">Phosphoprotein</keyword>
<keyword id="KW-1185">Reference proteome</keyword>
<keyword id="KW-0677">Repeat</keyword>
<keyword id="KW-0949">S-adenosyl-L-methionine</keyword>
<keyword id="KW-0808">Transferase</keyword>